<name>MOTI_FELCA</name>
<organism>
    <name type="scientific">Felis catus</name>
    <name type="common">Cat</name>
    <name type="synonym">Felis silvestris catus</name>
    <dbReference type="NCBI Taxonomy" id="9685"/>
    <lineage>
        <taxon>Eukaryota</taxon>
        <taxon>Metazoa</taxon>
        <taxon>Chordata</taxon>
        <taxon>Craniata</taxon>
        <taxon>Vertebrata</taxon>
        <taxon>Euteleostomi</taxon>
        <taxon>Mammalia</taxon>
        <taxon>Eutheria</taxon>
        <taxon>Laurasiatheria</taxon>
        <taxon>Carnivora</taxon>
        <taxon>Feliformia</taxon>
        <taxon>Felidae</taxon>
        <taxon>Felinae</taxon>
        <taxon>Felis</taxon>
    </lineage>
</organism>
<accession>Q9XSE2</accession>
<proteinExistence type="inferred from homology"/>
<evidence type="ECO:0000250" key="1"/>
<evidence type="ECO:0000256" key="2">
    <source>
        <dbReference type="SAM" id="MobiDB-lite"/>
    </source>
</evidence>
<evidence type="ECO:0000305" key="3"/>
<reference key="1">
    <citation type="submission" date="1999-02" db="EMBL/GenBank/DDBJ databases">
        <title>cDNA encoding prepromotilin from cat duodenum mucosa.</title>
        <authorList>
            <person name="Huang Z."/>
            <person name="Depoortere I."/>
            <person name="Peeters T.L."/>
        </authorList>
    </citation>
    <scope>NUCLEOTIDE SEQUENCE [MRNA]</scope>
    <source>
        <tissue>Duodenal mucosa</tissue>
    </source>
</reference>
<feature type="signal peptide" evidence="1">
    <location>
        <begin position="1"/>
        <end position="25"/>
    </location>
</feature>
<feature type="chain" id="PRO_0000342169" description="Promotilin">
    <location>
        <begin position="26"/>
        <end position="116"/>
    </location>
</feature>
<feature type="peptide" id="PRO_0000019180" description="Motilin">
    <location>
        <begin position="26"/>
        <end position="47"/>
    </location>
</feature>
<feature type="peptide" id="PRO_0000019181" description="Motilin-associated peptide">
    <location>
        <begin position="50"/>
        <end position="116"/>
    </location>
</feature>
<feature type="region of interest" description="Disordered" evidence="2">
    <location>
        <begin position="39"/>
        <end position="74"/>
    </location>
</feature>
<keyword id="KW-0165">Cleavage on pair of basic residues</keyword>
<keyword id="KW-0372">Hormone</keyword>
<keyword id="KW-1185">Reference proteome</keyword>
<keyword id="KW-0964">Secreted</keyword>
<keyword id="KW-0732">Signal</keyword>
<gene>
    <name type="primary">MLN</name>
</gene>
<dbReference type="EMBL" id="AF127917">
    <property type="protein sequence ID" value="AAD33347.1"/>
    <property type="molecule type" value="mRNA"/>
</dbReference>
<dbReference type="RefSeq" id="NP_001009278.1">
    <property type="nucleotide sequence ID" value="NM_001009278.1"/>
</dbReference>
<dbReference type="RefSeq" id="XP_044912938.1">
    <property type="nucleotide sequence ID" value="XM_045057003.1"/>
</dbReference>
<dbReference type="SMR" id="Q9XSE2"/>
<dbReference type="STRING" id="9685.ENSFCAP00000004890"/>
<dbReference type="PaxDb" id="9685-ENSFCAP00000004890"/>
<dbReference type="GeneID" id="493834"/>
<dbReference type="KEGG" id="fca:493834"/>
<dbReference type="CTD" id="4295"/>
<dbReference type="eggNOG" id="ENOG502SS7F">
    <property type="taxonomic scope" value="Eukaryota"/>
</dbReference>
<dbReference type="InParanoid" id="Q9XSE2"/>
<dbReference type="OrthoDB" id="9937685at2759"/>
<dbReference type="TreeFam" id="TF336217"/>
<dbReference type="Proteomes" id="UP000011712">
    <property type="component" value="Unplaced"/>
</dbReference>
<dbReference type="GO" id="GO:0005576">
    <property type="term" value="C:extracellular region"/>
    <property type="evidence" value="ECO:0007669"/>
    <property type="project" value="UniProtKB-SubCell"/>
</dbReference>
<dbReference type="GO" id="GO:0005179">
    <property type="term" value="F:hormone activity"/>
    <property type="evidence" value="ECO:0007669"/>
    <property type="project" value="UniProtKB-KW"/>
</dbReference>
<dbReference type="GO" id="GO:0031788">
    <property type="term" value="F:motilin receptor binding"/>
    <property type="evidence" value="ECO:0000318"/>
    <property type="project" value="GO_Central"/>
</dbReference>
<dbReference type="InterPro" id="IPR006737">
    <property type="entry name" value="Motilin_assoc"/>
</dbReference>
<dbReference type="InterPro" id="IPR006738">
    <property type="entry name" value="Motilin_ghrelin"/>
</dbReference>
<dbReference type="InterPro" id="IPR015662">
    <property type="entry name" value="Promotilin"/>
</dbReference>
<dbReference type="PANTHER" id="PTHR14156">
    <property type="entry name" value="MOTILIN"/>
    <property type="match status" value="1"/>
</dbReference>
<dbReference type="PANTHER" id="PTHR14156:SF0">
    <property type="entry name" value="PROMOTILIN"/>
    <property type="match status" value="1"/>
</dbReference>
<dbReference type="Pfam" id="PF04643">
    <property type="entry name" value="Motilin_assoc"/>
    <property type="match status" value="1"/>
</dbReference>
<dbReference type="Pfam" id="PF04644">
    <property type="entry name" value="Motilin_ghrelin"/>
    <property type="match status" value="1"/>
</dbReference>
<protein>
    <recommendedName>
        <fullName>Promotilin</fullName>
    </recommendedName>
    <component>
        <recommendedName>
            <fullName>Motilin</fullName>
        </recommendedName>
    </component>
    <component>
        <recommendedName>
            <fullName>Motilin-associated peptide</fullName>
            <shortName>MAP</shortName>
        </recommendedName>
    </component>
</protein>
<comment type="function">
    <text evidence="1">Plays an important role in the regulation of interdigestive gastrointestinal motility and indirectly causes rhythmic contraction of duodenal and colonic smooth muscle.</text>
</comment>
<comment type="subcellular location">
    <subcellularLocation>
        <location>Secreted</location>
    </subcellularLocation>
</comment>
<comment type="similarity">
    <text evidence="3">Belongs to the motilin family.</text>
</comment>
<sequence>MVSRKAVAVLLMVHVAVMLASQTEAFVPIFTHSELQRIREKERNKGQKKSLIVQQRSEEVGPLDPVEPPEEEENEVIKLTAPVAIGTRMNSRQLEKYRAALEGLLSEVLLPARNDK</sequence>